<dbReference type="EMBL" id="BX784024">
    <property type="status" value="NOT_ANNOTATED_CDS"/>
    <property type="molecule type" value="Genomic_DNA"/>
</dbReference>
<dbReference type="EMBL" id="BC047171">
    <property type="protein sequence ID" value="AAH47171.1"/>
    <property type="molecule type" value="mRNA"/>
</dbReference>
<dbReference type="RefSeq" id="NP_998668.1">
    <property type="nucleotide sequence ID" value="NM_213503.1"/>
</dbReference>
<dbReference type="SMR" id="Q1LVE8"/>
<dbReference type="FunCoup" id="Q1LVE8">
    <property type="interactions" value="3084"/>
</dbReference>
<dbReference type="STRING" id="7955.ENSDARP00000134109"/>
<dbReference type="PaxDb" id="7955-ENSDARP00000123676"/>
<dbReference type="Ensembl" id="ENSDART00000159274">
    <property type="protein sequence ID" value="ENSDARP00000134109"/>
    <property type="gene ID" value="ENSDARG00000103553"/>
</dbReference>
<dbReference type="Ensembl" id="ENSDART00000191973">
    <property type="protein sequence ID" value="ENSDARP00000153577"/>
    <property type="gene ID" value="ENSDARG00000103553"/>
</dbReference>
<dbReference type="GeneID" id="406824"/>
<dbReference type="KEGG" id="dre:406824"/>
<dbReference type="AGR" id="ZFIN:ZDB-GENE-040426-2901"/>
<dbReference type="CTD" id="23450"/>
<dbReference type="ZFIN" id="ZDB-GENE-040426-2901">
    <property type="gene designation" value="sf3b3"/>
</dbReference>
<dbReference type="eggNOG" id="KOG1898">
    <property type="taxonomic scope" value="Eukaryota"/>
</dbReference>
<dbReference type="HOGENOM" id="CLU_003246_0_0_1"/>
<dbReference type="InParanoid" id="Q1LVE8"/>
<dbReference type="OMA" id="PRATGHW"/>
<dbReference type="OrthoDB" id="436637at2759"/>
<dbReference type="PhylomeDB" id="Q1LVE8"/>
<dbReference type="TreeFam" id="TF105685"/>
<dbReference type="PRO" id="PR:Q1LVE8"/>
<dbReference type="Proteomes" id="UP000000437">
    <property type="component" value="Chromosome 18"/>
</dbReference>
<dbReference type="Bgee" id="ENSDARG00000103553">
    <property type="expression patterns" value="Expressed in gastrula and 30 other cell types or tissues"/>
</dbReference>
<dbReference type="GO" id="GO:0005634">
    <property type="term" value="C:nucleus"/>
    <property type="evidence" value="ECO:0000250"/>
    <property type="project" value="UniProtKB"/>
</dbReference>
<dbReference type="GO" id="GO:0005686">
    <property type="term" value="C:U2 snRNP"/>
    <property type="evidence" value="ECO:0000318"/>
    <property type="project" value="GO_Central"/>
</dbReference>
<dbReference type="GO" id="GO:0071005">
    <property type="term" value="C:U2-type precatalytic spliceosome"/>
    <property type="evidence" value="ECO:0000250"/>
    <property type="project" value="UniProtKB"/>
</dbReference>
<dbReference type="GO" id="GO:0005684">
    <property type="term" value="C:U2-type spliceosomal complex"/>
    <property type="evidence" value="ECO:0000250"/>
    <property type="project" value="UniProtKB"/>
</dbReference>
<dbReference type="GO" id="GO:0030620">
    <property type="term" value="F:U2 snRNA binding"/>
    <property type="evidence" value="ECO:0000318"/>
    <property type="project" value="GO_Central"/>
</dbReference>
<dbReference type="GO" id="GO:0000398">
    <property type="term" value="P:mRNA splicing, via spliceosome"/>
    <property type="evidence" value="ECO:0000250"/>
    <property type="project" value="UniProtKB"/>
</dbReference>
<dbReference type="FunFam" id="2.130.10.10:FF:001721">
    <property type="entry name" value="Spliceosomal protein sap, putative"/>
    <property type="match status" value="1"/>
</dbReference>
<dbReference type="FunFam" id="1.10.150.910:FF:000002">
    <property type="entry name" value="Splicing factor 3B subunit 3"/>
    <property type="match status" value="1"/>
</dbReference>
<dbReference type="FunFam" id="2.130.10.10:FF:000027">
    <property type="entry name" value="Splicing factor 3B subunit 3"/>
    <property type="match status" value="1"/>
</dbReference>
<dbReference type="FunFam" id="2.130.10.10:FF:000041">
    <property type="entry name" value="Splicing factor 3b subunit 3"/>
    <property type="match status" value="1"/>
</dbReference>
<dbReference type="Gene3D" id="1.10.150.910">
    <property type="match status" value="1"/>
</dbReference>
<dbReference type="Gene3D" id="2.130.10.10">
    <property type="entry name" value="YVTN repeat-like/Quinoprotein amine dehydrogenase"/>
    <property type="match status" value="3"/>
</dbReference>
<dbReference type="InterPro" id="IPR018846">
    <property type="entry name" value="Beta-prop_RSE1/DDB1/CPSF1_1st"/>
</dbReference>
<dbReference type="InterPro" id="IPR004871">
    <property type="entry name" value="Cleavage/polyA-sp_fac_asu_C"/>
</dbReference>
<dbReference type="InterPro" id="IPR050358">
    <property type="entry name" value="RSE1/DDB1/CFT1/CPSF1"/>
</dbReference>
<dbReference type="InterPro" id="IPR015943">
    <property type="entry name" value="WD40/YVTN_repeat-like_dom_sf"/>
</dbReference>
<dbReference type="InterPro" id="IPR036322">
    <property type="entry name" value="WD40_repeat_dom_sf"/>
</dbReference>
<dbReference type="PANTHER" id="PTHR10644">
    <property type="entry name" value="DNA REPAIR/RNA PROCESSING CPSF FAMILY"/>
    <property type="match status" value="1"/>
</dbReference>
<dbReference type="Pfam" id="PF10433">
    <property type="entry name" value="Beta-prop_RSE1_1st"/>
    <property type="match status" value="1"/>
</dbReference>
<dbReference type="Pfam" id="PF23726">
    <property type="entry name" value="Beta-prop_RSE1_2nd"/>
    <property type="match status" value="1"/>
</dbReference>
<dbReference type="Pfam" id="PF03178">
    <property type="entry name" value="CPSF_A"/>
    <property type="match status" value="1"/>
</dbReference>
<dbReference type="SUPFAM" id="SSF50978">
    <property type="entry name" value="WD40 repeat-like"/>
    <property type="match status" value="1"/>
</dbReference>
<sequence length="1217" mass="135622">MFLYNITLQRATGISHAIHGNFSGTKQQEIVVSRGKILELLRPDANTGKVHTLLTMEVFGVVRSLMAFRLTGGTKDYVVVGSDSGRIVILEYHPSKNMFEKIHQETFGKSGCRRIVPGQFLAVDPKGRAVMIGATEKQKLVYILNRDAAARLTISSPLEAHKANTLVYHVVGVDVGFENPMFACLEMDYEEADNDPTGEAAANTQQTLTFYELDLGLNHVVRKYSEALEEHGNFLITVPGGSDGPSGVLICSENYITYKNFGDQPDIRCPIPRRRNDLDDPERGMIFVCSATHKTKSMFFFLAQTEQGDIFKVTLETDEEMVTEIRMKYFDTIPVATAMCVLKTGFLFVSSEFGNHYLYQIAHLGDDDEEPEFSSAMPLEEGDTFFFQPRPLKNLVLVDEQESLSPIMSCQIADLANEDTPQLYVACGRGPRSTLRVLRHGLEVSEMAVSELPGNPNAVWTVRRHVEDEFDAYIIVSFVNATLVLSIGETVEEVTDSGFLGTTPTLSCSLLGEDALVQVYPDGIRHIRADKRVNEWKTPGKKTIIRCAVNQRQVVIALTGGELVYFEMDPSGQLNEYTERKEMSADVVCMSLANVPPGEQRSRFLAVGLVDNTVRIISLDPSDCLQPLSMQALPAQPESLCIVEMGGVEKQDELGEKGTIGFLYLNIGLQNGVLLRTVLDPVTGDLSDTRTRYLGSRPVKLFRVRMQGQEAVLAMSSRSWLSYSYQSRFHLTPLSYETLEYASGFASEQCPEGIVAISTNTLRILALEKLGAVFNQVAFPLQYTPRKFVIHPETNNLILIETDHNAYTEATKAQRKQQMAEEMVEAAGEDERELAAEMAAAFLNENLPEAIFGAPKAGSGQWASLVRLINPIQGNTLDLVQLEQNEAAFSVAICRFLNGGDDWYVLVGVARDMILNPRSVGGGYIYTYRIVGGGDKLEFLHKTPVEDVPLAIAPFQGRVLVGVGKLLRIYDLGKKKLLRKCENKHVPNLVTGIHTIGQRVIVSDVQESLFWVRYRRNENQLIIFADDTYPRWITTACLLDYDTMASADKFGNICVVRLPPNTSDDVDEDPTGNKALWDRGLLNGASQKAEIIINYHIGETVLSLQKTTLIPGGSESLVYTTLSGGIGILVPFTSHEDHDFFQHLEMHMRSEFPPLCGRDHLSFRSYYFPVKNVIDGDLCEQFNSMDPHKQKSVSEELDRTPPEVSKKLEDIRTRYAF</sequence>
<comment type="function">
    <text evidence="1">Component of the 17S U2 SnRNP complex of the spliceosome, a large ribonucleoprotein complex that removes introns from transcribed pre-mRNAs. The 17S U2 SnRNP complex (1) directly participates in early spliceosome assembly and (2) mediates recognition of the intron branch site during pre-mRNA splicing by promoting the selection of the pre-mRNA branch-site adenosine, the nucleophile for the first step of splicing. Within the 17S U2 SnRNP complex, SF3B3 is part of the SF3B subcomplex, which is required for 'A' complex assembly formed by the stable binding of U2 snRNP to the branchpoint sequence in pre-mRNA. Also acts as a component of the minor spliceosome, which is involved in the splicing of U12-type introns in pre-mRNAs.</text>
</comment>
<comment type="subunit">
    <text evidence="1">Component of the 17S U2 SnRNP complex, a ribonucleoprotein complex that contains small nuclear RNA (snRNA) U2 and a number of specific proteins. Part of the SF3B subcomplex of the 17S U2 SnRNP complex. SF3B associates with the splicing subcomplex SF3A and a 12S RNA unit to form the U2 small nuclear ribonucleoproteins complex (U2 snRNP). Component of the minor (U12-type spliceosome) spliceosome.</text>
</comment>
<comment type="subcellular location">
    <subcellularLocation>
        <location evidence="1">Nucleus</location>
    </subcellularLocation>
</comment>
<comment type="domain">
    <text evidence="1">The core of the protein consists of three beta-propeller domains.</text>
</comment>
<comment type="similarity">
    <text evidence="2">Belongs to the RSE1 family.</text>
</comment>
<reference key="1">
    <citation type="journal article" date="2013" name="Nature">
        <title>The zebrafish reference genome sequence and its relationship to the human genome.</title>
        <authorList>
            <person name="Howe K."/>
            <person name="Clark M.D."/>
            <person name="Torroja C.F."/>
            <person name="Torrance J."/>
            <person name="Berthelot C."/>
            <person name="Muffato M."/>
            <person name="Collins J.E."/>
            <person name="Humphray S."/>
            <person name="McLaren K."/>
            <person name="Matthews L."/>
            <person name="McLaren S."/>
            <person name="Sealy I."/>
            <person name="Caccamo M."/>
            <person name="Churcher C."/>
            <person name="Scott C."/>
            <person name="Barrett J.C."/>
            <person name="Koch R."/>
            <person name="Rauch G.J."/>
            <person name="White S."/>
            <person name="Chow W."/>
            <person name="Kilian B."/>
            <person name="Quintais L.T."/>
            <person name="Guerra-Assuncao J.A."/>
            <person name="Zhou Y."/>
            <person name="Gu Y."/>
            <person name="Yen J."/>
            <person name="Vogel J.H."/>
            <person name="Eyre T."/>
            <person name="Redmond S."/>
            <person name="Banerjee R."/>
            <person name="Chi J."/>
            <person name="Fu B."/>
            <person name="Langley E."/>
            <person name="Maguire S.F."/>
            <person name="Laird G.K."/>
            <person name="Lloyd D."/>
            <person name="Kenyon E."/>
            <person name="Donaldson S."/>
            <person name="Sehra H."/>
            <person name="Almeida-King J."/>
            <person name="Loveland J."/>
            <person name="Trevanion S."/>
            <person name="Jones M."/>
            <person name="Quail M."/>
            <person name="Willey D."/>
            <person name="Hunt A."/>
            <person name="Burton J."/>
            <person name="Sims S."/>
            <person name="McLay K."/>
            <person name="Plumb B."/>
            <person name="Davis J."/>
            <person name="Clee C."/>
            <person name="Oliver K."/>
            <person name="Clark R."/>
            <person name="Riddle C."/>
            <person name="Elliot D."/>
            <person name="Threadgold G."/>
            <person name="Harden G."/>
            <person name="Ware D."/>
            <person name="Begum S."/>
            <person name="Mortimore B."/>
            <person name="Kerry G."/>
            <person name="Heath P."/>
            <person name="Phillimore B."/>
            <person name="Tracey A."/>
            <person name="Corby N."/>
            <person name="Dunn M."/>
            <person name="Johnson C."/>
            <person name="Wood J."/>
            <person name="Clark S."/>
            <person name="Pelan S."/>
            <person name="Griffiths G."/>
            <person name="Smith M."/>
            <person name="Glithero R."/>
            <person name="Howden P."/>
            <person name="Barker N."/>
            <person name="Lloyd C."/>
            <person name="Stevens C."/>
            <person name="Harley J."/>
            <person name="Holt K."/>
            <person name="Panagiotidis G."/>
            <person name="Lovell J."/>
            <person name="Beasley H."/>
            <person name="Henderson C."/>
            <person name="Gordon D."/>
            <person name="Auger K."/>
            <person name="Wright D."/>
            <person name="Collins J."/>
            <person name="Raisen C."/>
            <person name="Dyer L."/>
            <person name="Leung K."/>
            <person name="Robertson L."/>
            <person name="Ambridge K."/>
            <person name="Leongamornlert D."/>
            <person name="McGuire S."/>
            <person name="Gilderthorp R."/>
            <person name="Griffiths C."/>
            <person name="Manthravadi D."/>
            <person name="Nichol S."/>
            <person name="Barker G."/>
            <person name="Whitehead S."/>
            <person name="Kay M."/>
            <person name="Brown J."/>
            <person name="Murnane C."/>
            <person name="Gray E."/>
            <person name="Humphries M."/>
            <person name="Sycamore N."/>
            <person name="Barker D."/>
            <person name="Saunders D."/>
            <person name="Wallis J."/>
            <person name="Babbage A."/>
            <person name="Hammond S."/>
            <person name="Mashreghi-Mohammadi M."/>
            <person name="Barr L."/>
            <person name="Martin S."/>
            <person name="Wray P."/>
            <person name="Ellington A."/>
            <person name="Matthews N."/>
            <person name="Ellwood M."/>
            <person name="Woodmansey R."/>
            <person name="Clark G."/>
            <person name="Cooper J."/>
            <person name="Tromans A."/>
            <person name="Grafham D."/>
            <person name="Skuce C."/>
            <person name="Pandian R."/>
            <person name="Andrews R."/>
            <person name="Harrison E."/>
            <person name="Kimberley A."/>
            <person name="Garnett J."/>
            <person name="Fosker N."/>
            <person name="Hall R."/>
            <person name="Garner P."/>
            <person name="Kelly D."/>
            <person name="Bird C."/>
            <person name="Palmer S."/>
            <person name="Gehring I."/>
            <person name="Berger A."/>
            <person name="Dooley C.M."/>
            <person name="Ersan-Urun Z."/>
            <person name="Eser C."/>
            <person name="Geiger H."/>
            <person name="Geisler M."/>
            <person name="Karotki L."/>
            <person name="Kirn A."/>
            <person name="Konantz J."/>
            <person name="Konantz M."/>
            <person name="Oberlander M."/>
            <person name="Rudolph-Geiger S."/>
            <person name="Teucke M."/>
            <person name="Lanz C."/>
            <person name="Raddatz G."/>
            <person name="Osoegawa K."/>
            <person name="Zhu B."/>
            <person name="Rapp A."/>
            <person name="Widaa S."/>
            <person name="Langford C."/>
            <person name="Yang F."/>
            <person name="Schuster S.C."/>
            <person name="Carter N.P."/>
            <person name="Harrow J."/>
            <person name="Ning Z."/>
            <person name="Herrero J."/>
            <person name="Searle S.M."/>
            <person name="Enright A."/>
            <person name="Geisler R."/>
            <person name="Plasterk R.H."/>
            <person name="Lee C."/>
            <person name="Westerfield M."/>
            <person name="de Jong P.J."/>
            <person name="Zon L.I."/>
            <person name="Postlethwait J.H."/>
            <person name="Nusslein-Volhard C."/>
            <person name="Hubbard T.J."/>
            <person name="Roest Crollius H."/>
            <person name="Rogers J."/>
            <person name="Stemple D.L."/>
        </authorList>
    </citation>
    <scope>NUCLEOTIDE SEQUENCE [LARGE SCALE GENOMIC DNA]</scope>
    <source>
        <strain>Tuebingen</strain>
    </source>
</reference>
<reference key="2">
    <citation type="submission" date="2003-02" db="EMBL/GenBank/DDBJ databases">
        <authorList>
            <consortium name="NIH - Zebrafish Gene Collection (ZGC) project"/>
        </authorList>
    </citation>
    <scope>NUCLEOTIDE SEQUENCE [LARGE SCALE MRNA]</scope>
    <source>
        <strain>AB</strain>
    </source>
</reference>
<gene>
    <name type="primary">sf3b3</name>
    <name type="ORF">zgc:55440</name>
</gene>
<evidence type="ECO:0000250" key="1">
    <source>
        <dbReference type="UniProtKB" id="Q15393"/>
    </source>
</evidence>
<evidence type="ECO:0000305" key="2"/>
<keyword id="KW-0507">mRNA processing</keyword>
<keyword id="KW-0508">mRNA splicing</keyword>
<keyword id="KW-0539">Nucleus</keyword>
<keyword id="KW-1185">Reference proteome</keyword>
<keyword id="KW-0747">Spliceosome</keyword>
<name>SF3B3_DANRE</name>
<accession>Q1LVE8</accession>
<accession>Q802W7</accession>
<feature type="chain" id="PRO_0000276757" description="Splicing factor 3B subunit 3">
    <location>
        <begin position="1"/>
        <end position="1217"/>
    </location>
</feature>
<feature type="sequence conflict" description="In Ref. 2; AAH47171." evidence="2" ref="2">
    <original>I</original>
    <variation>M</variation>
    <location>
        <position position="132"/>
    </location>
</feature>
<feature type="sequence conflict" description="In Ref. 2; AAH47171." evidence="2" ref="2">
    <original>R</original>
    <variation>G</variation>
    <location>
        <position position="432"/>
    </location>
</feature>
<feature type="sequence conflict" description="In Ref. 2; AAH47171." evidence="2" ref="2">
    <original>G</original>
    <variation>C</variation>
    <location>
        <position position="661"/>
    </location>
</feature>
<organism>
    <name type="scientific">Danio rerio</name>
    <name type="common">Zebrafish</name>
    <name type="synonym">Brachydanio rerio</name>
    <dbReference type="NCBI Taxonomy" id="7955"/>
    <lineage>
        <taxon>Eukaryota</taxon>
        <taxon>Metazoa</taxon>
        <taxon>Chordata</taxon>
        <taxon>Craniata</taxon>
        <taxon>Vertebrata</taxon>
        <taxon>Euteleostomi</taxon>
        <taxon>Actinopterygii</taxon>
        <taxon>Neopterygii</taxon>
        <taxon>Teleostei</taxon>
        <taxon>Ostariophysi</taxon>
        <taxon>Cypriniformes</taxon>
        <taxon>Danionidae</taxon>
        <taxon>Danioninae</taxon>
        <taxon>Danio</taxon>
    </lineage>
</organism>
<protein>
    <recommendedName>
        <fullName>Splicing factor 3B subunit 3</fullName>
    </recommendedName>
</protein>
<proteinExistence type="evidence at transcript level"/>